<protein>
    <recommendedName>
        <fullName>Transcription factor SFP1</fullName>
    </recommendedName>
    <alternativeName>
        <fullName>Split finger protein 1</fullName>
    </alternativeName>
</protein>
<evidence type="ECO:0000250" key="1"/>
<evidence type="ECO:0000255" key="2">
    <source>
        <dbReference type="PROSITE-ProRule" id="PRU00042"/>
    </source>
</evidence>
<evidence type="ECO:0000256" key="3">
    <source>
        <dbReference type="SAM" id="MobiDB-lite"/>
    </source>
</evidence>
<evidence type="ECO:0000269" key="4">
    <source>
    </source>
</evidence>
<evidence type="ECO:0000269" key="5">
    <source>
    </source>
</evidence>
<evidence type="ECO:0000269" key="6">
    <source>
    </source>
</evidence>
<evidence type="ECO:0000269" key="7">
    <source>
    </source>
</evidence>
<evidence type="ECO:0000269" key="8">
    <source>
    </source>
</evidence>
<evidence type="ECO:0000269" key="9">
    <source>
    </source>
</evidence>
<evidence type="ECO:0000305" key="10"/>
<evidence type="ECO:0000305" key="11">
    <source>
    </source>
</evidence>
<evidence type="ECO:0000305" key="12">
    <source>
    </source>
</evidence>
<keyword id="KW-0034">Amyloid</keyword>
<keyword id="KW-0963">Cytoplasm</keyword>
<keyword id="KW-0238">DNA-binding</keyword>
<keyword id="KW-0479">Metal-binding</keyword>
<keyword id="KW-0539">Nucleus</keyword>
<keyword id="KW-0597">Phosphoprotein</keyword>
<keyword id="KW-0640">Prion</keyword>
<keyword id="KW-1185">Reference proteome</keyword>
<keyword id="KW-0677">Repeat</keyword>
<keyword id="KW-0346">Stress response</keyword>
<keyword id="KW-0804">Transcription</keyword>
<keyword id="KW-0805">Transcription regulation</keyword>
<keyword id="KW-0862">Zinc</keyword>
<keyword id="KW-0863">Zinc-finger</keyword>
<accession>P32432</accession>
<accession>D6VZ36</accession>
<comment type="function">
    <text evidence="5 6 7 8 9">Transcription factor that regulates ribosomal protein (RP) and ribosome biogenesis (Ribi) gene expression in response to nutrients and stress. Promotes RP gene expression under optimal growth conditions. Leaves the nucleus upon environmental challenges, resulting in a down-regulation of RP gene transcription. The effect of the environmental cues on SFP1 localization is mediated through the TOR pathway. Also regulates the expression of genes involved in the G2/M transition during the mitotic cell cycle and the DNA-damage response. Required for carbon-source modulation of cell size.</text>
</comment>
<comment type="subunit">
    <text evidence="8">Interacts with the target of rapamycin complex 1 (TORC1) in a rapamycin-dependent manner. Interacts with MRS6.</text>
</comment>
<comment type="interaction">
    <interactant intactId="EBI-17035">
        <id>P32432</id>
    </interactant>
    <interactant intactId="EBI-14799">
        <id>P32864</id>
        <label>MRS6</label>
    </interactant>
    <organismsDiffer>false</organismsDiffer>
    <experiments>6</experiments>
</comment>
<comment type="subcellular location">
    <subcellularLocation>
        <location>Cytoplasm</location>
    </subcellularLocation>
    <subcellularLocation>
        <location>Nucleus</location>
    </subcellularLocation>
    <text>Nuclear under optimal growth conditions. Leaves the nucleus in response to stress or changes in nutrient availability. The [ISP+] aggregates appear to be nuclear.</text>
</comment>
<comment type="domain">
    <text evidence="1">The prion domain (PrD) is a Gln/Asn (Q/N)-rich domain, which is unstructured in its native, soluble form, and which forms a parallel in-register beta-sheet in its amyloid form.</text>
</comment>
<comment type="PTM">
    <text evidence="8">Phosphorylated by TORC1 kinase at multiple sites. Phosphorylation regulates nuclear localization and RP promoter binding.</text>
</comment>
<comment type="miscellaneous">
    <text evidence="11 12">[ISP+] is the prion form of SFP1. [ISP+] is the result of a conformational change of the cellular SFP1 protein that becomes self-propagating and infectious. This conformational change generates a form of SFP1 that assembles into amyloid fibrils. [ISP+]-aggregates accumulate in the nucleus, and results in significantly larger cell size and increased drug resistance (PubMed:20498075). [ISP+] can be cured by GdnHCl (PubMed:11805042). It is speculated that prion properties of transcription factors may generate an optimized phenotypic heterogeneity that buffers yeast populations against diverse environmental insults (PubMed:20498075).</text>
</comment>
<comment type="miscellaneous">
    <text evidence="4">Present with 259 molecules/cell in log phase SD medium.</text>
</comment>
<comment type="caution">
    <text evidence="10">It is uncertain whether Met-1 or Met-6 is the initiator.</text>
</comment>
<comment type="sequence caution" evidence="10">
    <conflict type="erroneous initiation">
        <sequence resource="EMBL-CDS" id="AAA35041"/>
    </conflict>
</comment>
<feature type="chain" id="PRO_0000046851" description="Transcription factor SFP1">
    <location>
        <begin position="1"/>
        <end position="683"/>
    </location>
</feature>
<feature type="zinc finger region" description="C2H2-type 1" evidence="2">
    <location>
        <begin position="598"/>
        <end position="623"/>
    </location>
</feature>
<feature type="zinc finger region" description="C2H2-type 2" evidence="2">
    <location>
        <begin position="659"/>
        <end position="683"/>
    </location>
</feature>
<feature type="region of interest" description="Disordered" evidence="3">
    <location>
        <begin position="156"/>
        <end position="178"/>
    </location>
</feature>
<feature type="region of interest" description="Prion domain (PrD)">
    <location>
        <begin position="230"/>
        <end position="458"/>
    </location>
</feature>
<feature type="region of interest" description="Disordered" evidence="3">
    <location>
        <begin position="305"/>
        <end position="324"/>
    </location>
</feature>
<feature type="region of interest" description="Disordered" evidence="3">
    <location>
        <begin position="332"/>
        <end position="357"/>
    </location>
</feature>
<feature type="region of interest" description="Disordered" evidence="3">
    <location>
        <begin position="399"/>
        <end position="420"/>
    </location>
</feature>
<feature type="region of interest" description="Disordered" evidence="3">
    <location>
        <begin position="498"/>
        <end position="517"/>
    </location>
</feature>
<feature type="region of interest" description="Disordered" evidence="3">
    <location>
        <begin position="535"/>
        <end position="573"/>
    </location>
</feature>
<feature type="compositionally biased region" description="Polar residues" evidence="3">
    <location>
        <begin position="160"/>
        <end position="173"/>
    </location>
</feature>
<feature type="compositionally biased region" description="Acidic residues" evidence="3">
    <location>
        <begin position="535"/>
        <end position="557"/>
    </location>
</feature>
<feature type="compositionally biased region" description="Polar residues" evidence="3">
    <location>
        <begin position="558"/>
        <end position="573"/>
    </location>
</feature>
<reference key="1">
    <citation type="journal article" date="1991" name="Gene">
        <title>A split zinc-finger protein is required for normal yeast growth.</title>
        <authorList>
            <person name="Blumberg H."/>
            <person name="Silver P."/>
        </authorList>
    </citation>
    <scope>NUCLEOTIDE SEQUENCE [GENOMIC DNA]</scope>
</reference>
<reference key="2">
    <citation type="journal article" date="1997" name="Nature">
        <title>The nucleotide sequence of Saccharomyces cerevisiae chromosome XII.</title>
        <authorList>
            <person name="Johnston M."/>
            <person name="Hillier L.W."/>
            <person name="Riles L."/>
            <person name="Albermann K."/>
            <person name="Andre B."/>
            <person name="Ansorge W."/>
            <person name="Benes V."/>
            <person name="Brueckner M."/>
            <person name="Delius H."/>
            <person name="Dubois E."/>
            <person name="Duesterhoeft A."/>
            <person name="Entian K.-D."/>
            <person name="Floeth M."/>
            <person name="Goffeau A."/>
            <person name="Hebling U."/>
            <person name="Heumann K."/>
            <person name="Heuss-Neitzel D."/>
            <person name="Hilbert H."/>
            <person name="Hilger F."/>
            <person name="Kleine K."/>
            <person name="Koetter P."/>
            <person name="Louis E.J."/>
            <person name="Messenguy F."/>
            <person name="Mewes H.-W."/>
            <person name="Miosga T."/>
            <person name="Moestl D."/>
            <person name="Mueller-Auer S."/>
            <person name="Nentwich U."/>
            <person name="Obermaier B."/>
            <person name="Piravandi E."/>
            <person name="Pohl T.M."/>
            <person name="Portetelle D."/>
            <person name="Purnelle B."/>
            <person name="Rechmann S."/>
            <person name="Rieger M."/>
            <person name="Rinke M."/>
            <person name="Rose M."/>
            <person name="Scharfe M."/>
            <person name="Scherens B."/>
            <person name="Scholler P."/>
            <person name="Schwager C."/>
            <person name="Schwarz S."/>
            <person name="Underwood A.P."/>
            <person name="Urrestarazu L.A."/>
            <person name="Vandenbol M."/>
            <person name="Verhasselt P."/>
            <person name="Vierendeels F."/>
            <person name="Voet M."/>
            <person name="Volckaert G."/>
            <person name="Voss H."/>
            <person name="Wambutt R."/>
            <person name="Wedler E."/>
            <person name="Wedler H."/>
            <person name="Zimmermann F.K."/>
            <person name="Zollner A."/>
            <person name="Hani J."/>
            <person name="Hoheisel J.D."/>
        </authorList>
    </citation>
    <scope>NUCLEOTIDE SEQUENCE [LARGE SCALE GENOMIC DNA]</scope>
    <source>
        <strain>ATCC 204508 / S288c</strain>
    </source>
</reference>
<reference key="3">
    <citation type="journal article" date="2014" name="G3 (Bethesda)">
        <title>The reference genome sequence of Saccharomyces cerevisiae: Then and now.</title>
        <authorList>
            <person name="Engel S.R."/>
            <person name="Dietrich F.S."/>
            <person name="Fisk D.G."/>
            <person name="Binkley G."/>
            <person name="Balakrishnan R."/>
            <person name="Costanzo M.C."/>
            <person name="Dwight S.S."/>
            <person name="Hitz B.C."/>
            <person name="Karra K."/>
            <person name="Nash R.S."/>
            <person name="Weng S."/>
            <person name="Wong E.D."/>
            <person name="Lloyd P."/>
            <person name="Skrzypek M.S."/>
            <person name="Miyasato S.R."/>
            <person name="Simison M."/>
            <person name="Cherry J.M."/>
        </authorList>
    </citation>
    <scope>GENOME REANNOTATION</scope>
    <source>
        <strain>ATCC 204508 / S288c</strain>
    </source>
</reference>
<reference key="4">
    <citation type="journal article" date="1998" name="Genetics">
        <title>The SFP1 gene product of Saccharomyces cerevisiae regulates G2/M transitions during the mitotic cell cycle and DNA-damage response.</title>
        <authorList>
            <person name="Xu Z."/>
            <person name="Norris D."/>
        </authorList>
    </citation>
    <scope>FUNCTION</scope>
    <scope>SUBCELLULAR LOCATION</scope>
</reference>
<reference key="5">
    <citation type="journal article" date="2002" name="Genetics">
        <title>Novel non-Mendelian determinant involved in the control of translation accuracy in Saccharomyces cerevisiae.</title>
        <authorList>
            <person name="Volkov K.V."/>
            <person name="Aksenova A.Y."/>
            <person name="Soom M.J."/>
            <person name="Osipov K.V."/>
            <person name="Svitin A.V."/>
            <person name="Kurischko C."/>
            <person name="Shkundina I.S."/>
            <person name="Ter-Avanesyan M.D."/>
            <person name="Inge-Vechtomov S.G."/>
            <person name="Mironova L.N."/>
        </authorList>
    </citation>
    <scope>IDENTIFICATION OF PRION FORM</scope>
</reference>
<reference key="6">
    <citation type="journal article" date="2003" name="Nature">
        <title>Global analysis of protein localization in budding yeast.</title>
        <authorList>
            <person name="Huh W.-K."/>
            <person name="Falvo J.V."/>
            <person name="Gerke L.C."/>
            <person name="Carroll A.S."/>
            <person name="Howson R.W."/>
            <person name="Weissman J.S."/>
            <person name="O'Shea E.K."/>
        </authorList>
    </citation>
    <scope>SUBCELLULAR LOCATION [LARGE SCALE ANALYSIS]</scope>
</reference>
<reference key="7">
    <citation type="journal article" date="2003" name="Nature">
        <title>Global analysis of protein expression in yeast.</title>
        <authorList>
            <person name="Ghaemmaghami S."/>
            <person name="Huh W.-K."/>
            <person name="Bower K."/>
            <person name="Howson R.W."/>
            <person name="Belle A."/>
            <person name="Dephoure N."/>
            <person name="O'Shea E.K."/>
            <person name="Weissman J.S."/>
        </authorList>
    </citation>
    <scope>LEVEL OF PROTEIN EXPRESSION [LARGE SCALE ANALYSIS]</scope>
</reference>
<reference key="8">
    <citation type="journal article" date="2004" name="Genes Dev.">
        <title>A dynamic transcriptional network communicates growth potential to ribosome synthesis and critical cell size.</title>
        <authorList>
            <person name="Jorgensen P."/>
            <person name="Rupes I."/>
            <person name="Sharom J.R."/>
            <person name="Schneper L."/>
            <person name="Broach J.R."/>
            <person name="Tyers M."/>
        </authorList>
    </citation>
    <scope>FUNCTION</scope>
</reference>
<reference key="9">
    <citation type="journal article" date="2004" name="Proc. Natl. Acad. Sci. U.S.A.">
        <title>Sfp1 is a stress- and nutrient-sensitive regulator of ribosomal protein gene expression.</title>
        <authorList>
            <person name="Marion R.M."/>
            <person name="Regev A."/>
            <person name="Segal E."/>
            <person name="Barash Y."/>
            <person name="Koller D."/>
            <person name="Friedman N."/>
            <person name="O'Shea E.K."/>
        </authorList>
    </citation>
    <scope>FUNCTION</scope>
    <scope>SUBCELLULAR LOCATION</scope>
</reference>
<reference key="10">
    <citation type="journal article" date="2005" name="Yeast">
        <title>SFP1 is involved in cell size modulation in respiro-fermentative growth conditions.</title>
        <authorList>
            <person name="Cipollina C."/>
            <person name="Alberghina L."/>
            <person name="Porro D."/>
            <person name="Vai M."/>
        </authorList>
    </citation>
    <scope>FUNCTION</scope>
</reference>
<reference key="11">
    <citation type="journal article" date="2007" name="J. Proteome Res.">
        <title>Large-scale phosphorylation analysis of alpha-factor-arrested Saccharomyces cerevisiae.</title>
        <authorList>
            <person name="Li X."/>
            <person name="Gerber S.A."/>
            <person name="Rudner A.D."/>
            <person name="Beausoleil S.A."/>
            <person name="Haas W."/>
            <person name="Villen J."/>
            <person name="Elias J.E."/>
            <person name="Gygi S.P."/>
        </authorList>
    </citation>
    <scope>IDENTIFICATION BY MASS SPECTROMETRY [LARGE SCALE ANALYSIS]</scope>
    <source>
        <strain>ADR376</strain>
    </source>
</reference>
<reference key="12">
    <citation type="journal article" date="2008" name="Mol. Cell. Proteomics">
        <title>A multidimensional chromatography technology for in-depth phosphoproteome analysis.</title>
        <authorList>
            <person name="Albuquerque C.P."/>
            <person name="Smolka M.B."/>
            <person name="Payne S.H."/>
            <person name="Bafna V."/>
            <person name="Eng J."/>
            <person name="Zhou H."/>
        </authorList>
    </citation>
    <scope>IDENTIFICATION BY MASS SPECTROMETRY [LARGE SCALE ANALYSIS]</scope>
</reference>
<reference key="13">
    <citation type="journal article" date="2009" name="Mol. Cell">
        <title>Sfp1 interaction with TORC1 and Mrs6 reveals feedback regulation on TOR signaling.</title>
        <authorList>
            <person name="Lempiainen H."/>
            <person name="Uotila A."/>
            <person name="Urban J."/>
            <person name="Dohnal I."/>
            <person name="Ammerer G."/>
            <person name="Loewith R."/>
            <person name="Shore D."/>
        </authorList>
    </citation>
    <scope>FUNCTION</scope>
    <scope>INTERACTION WITH TORC1 AND MRS6</scope>
    <scope>PHOSPHORYLATION BY TORC1</scope>
</reference>
<reference key="14">
    <citation type="journal article" date="2009" name="Science">
        <title>Global analysis of Cdk1 substrate phosphorylation sites provides insights into evolution.</title>
        <authorList>
            <person name="Holt L.J."/>
            <person name="Tuch B.B."/>
            <person name="Villen J."/>
            <person name="Johnson A.D."/>
            <person name="Gygi S.P."/>
            <person name="Morgan D.O."/>
        </authorList>
    </citation>
    <scope>IDENTIFICATION BY MASS SPECTROMETRY [LARGE SCALE ANALYSIS]</scope>
</reference>
<reference key="15">
    <citation type="journal article" date="2010" name="Proc. Natl. Acad. Sci. U.S.A.">
        <title>Non-Mendelian determinant [ISP+] in yeast is a nuclear-residing prion form of the global transcriptional regulator Sfp1.</title>
        <authorList>
            <person name="Rogoza T."/>
            <person name="Goginashvili A."/>
            <person name="Rodionova S."/>
            <person name="Ivanov M."/>
            <person name="Viktorovskaya O."/>
            <person name="Rubel A."/>
            <person name="Volkov K."/>
            <person name="Mironova L."/>
        </authorList>
    </citation>
    <scope>PRION FORMATION</scope>
</reference>
<name>SFP1_YEAST</name>
<gene>
    <name type="primary">SFP1</name>
    <name type="ordered locus">YLR403W</name>
    <name type="ORF">L8084.4</name>
</gene>
<sequence length="683" mass="74785">MDFTTMTMASNMATSTTTTATSAHASINSSSNFNIDIDSNQNTPSILINNNSDSSNGKNTDFNGVNNIHQKNIMNNTNNVHLYSPNIMDQTLLTPQDIAKLRRESIAHSQGMGGVSWGSISVGSWLRDEIISRRNSIVPASANGAASAAASATTTATNTLQIQQPTKRPSVSNPPYHRGYSISPQIAYTAYLPNLEKQYCKDYSCCGLSLPGLHDLLRHYEEAHISTSPNTTNMSQIPMNSAGNTSSSVRMTNNTSSANYNLQNNMAANTKNAGHKTNTMQAHSSNATNNTSINNMHANLQSNMDSNSTIRQSQHPHHQQNIIQQQLQSNSVNHTSGAVPTPSVMGSATASSTTANPNVISITGAPNSGLSMANHSQQLHLNGNLVDAVSTNDVFLRTSNSPSRHVPHNKQINSNNNSGININNNTSHNSNINMGSKNAMVNRPHTFNNYSLNKTSRNPIQHQSRKIDPHQTDLSPLVLVQDIDLSFMDDDILGPSNHNSMNSVVNPTTGSHNYNTFHSSVHAKSSQNMVEDQDIDDIDDDDDVDDDDDDDDDDDTENGSSSNGKSVHNNNYKMPQQAYIDDPARRLYVMDHEEQKPFKCPVIGCEKTYKNQNGLKYHRLHGHQNQKLHENPDGTFSVIDPDSTDSFGDGMGSAKDKPYRCEVCGKRYKNLNGLKYHRGHSTH</sequence>
<organism>
    <name type="scientific">Saccharomyces cerevisiae (strain ATCC 204508 / S288c)</name>
    <name type="common">Baker's yeast</name>
    <dbReference type="NCBI Taxonomy" id="559292"/>
    <lineage>
        <taxon>Eukaryota</taxon>
        <taxon>Fungi</taxon>
        <taxon>Dikarya</taxon>
        <taxon>Ascomycota</taxon>
        <taxon>Saccharomycotina</taxon>
        <taxon>Saccharomycetes</taxon>
        <taxon>Saccharomycetales</taxon>
        <taxon>Saccharomycetaceae</taxon>
        <taxon>Saccharomyces</taxon>
    </lineage>
</organism>
<dbReference type="EMBL" id="M63577">
    <property type="protein sequence ID" value="AAA35041.1"/>
    <property type="status" value="ALT_INIT"/>
    <property type="molecule type" value="Genomic_DNA"/>
</dbReference>
<dbReference type="EMBL" id="U19729">
    <property type="protein sequence ID" value="AAB82343.1"/>
    <property type="molecule type" value="Genomic_DNA"/>
</dbReference>
<dbReference type="EMBL" id="BK006945">
    <property type="protein sequence ID" value="DAA09702.1"/>
    <property type="molecule type" value="Genomic_DNA"/>
</dbReference>
<dbReference type="PIR" id="JH0497">
    <property type="entry name" value="JH0497"/>
</dbReference>
<dbReference type="RefSeq" id="NP_013507.1">
    <property type="nucleotide sequence ID" value="NM_001182291.1"/>
</dbReference>
<dbReference type="BioGRID" id="31660">
    <property type="interactions" value="323"/>
</dbReference>
<dbReference type="DIP" id="DIP-1379N"/>
<dbReference type="FunCoup" id="P32432">
    <property type="interactions" value="3246"/>
</dbReference>
<dbReference type="IntAct" id="P32432">
    <property type="interactions" value="20"/>
</dbReference>
<dbReference type="MINT" id="P32432"/>
<dbReference type="STRING" id="4932.YLR403W"/>
<dbReference type="GlyGen" id="P32432">
    <property type="glycosylation" value="3 sites, 1 O-linked glycan (2 sites)"/>
</dbReference>
<dbReference type="iPTMnet" id="P32432"/>
<dbReference type="PaxDb" id="4932-YLR403W"/>
<dbReference type="PeptideAtlas" id="P32432"/>
<dbReference type="EnsemblFungi" id="YLR403W_mRNA">
    <property type="protein sequence ID" value="YLR403W"/>
    <property type="gene ID" value="YLR403W"/>
</dbReference>
<dbReference type="GeneID" id="851119"/>
<dbReference type="KEGG" id="sce:YLR403W"/>
<dbReference type="AGR" id="SGD:S000004395"/>
<dbReference type="SGD" id="S000004395">
    <property type="gene designation" value="SFP1"/>
</dbReference>
<dbReference type="VEuPathDB" id="FungiDB:YLR403W"/>
<dbReference type="eggNOG" id="KOG4124">
    <property type="taxonomic scope" value="Eukaryota"/>
</dbReference>
<dbReference type="GeneTree" id="ENSGT00390000003635"/>
<dbReference type="HOGENOM" id="CLU_013026_0_1_1"/>
<dbReference type="InParanoid" id="P32432"/>
<dbReference type="OMA" id="DHEEHKP"/>
<dbReference type="OrthoDB" id="3269380at2759"/>
<dbReference type="BioCyc" id="YEAST:G3O-32465-MONOMER"/>
<dbReference type="BioGRID-ORCS" id="851119">
    <property type="hits" value="8 hits in 13 CRISPR screens"/>
</dbReference>
<dbReference type="PRO" id="PR:P32432"/>
<dbReference type="Proteomes" id="UP000002311">
    <property type="component" value="Chromosome XII"/>
</dbReference>
<dbReference type="RNAct" id="P32432">
    <property type="molecule type" value="protein"/>
</dbReference>
<dbReference type="GO" id="GO:0005737">
    <property type="term" value="C:cytoplasm"/>
    <property type="evidence" value="ECO:0000314"/>
    <property type="project" value="SGD"/>
</dbReference>
<dbReference type="GO" id="GO:0005634">
    <property type="term" value="C:nucleus"/>
    <property type="evidence" value="ECO:0000314"/>
    <property type="project" value="SGD"/>
</dbReference>
<dbReference type="GO" id="GO:0003677">
    <property type="term" value="F:DNA binding"/>
    <property type="evidence" value="ECO:0007669"/>
    <property type="project" value="UniProtKB-KW"/>
</dbReference>
<dbReference type="GO" id="GO:0000981">
    <property type="term" value="F:DNA-binding transcription factor activity, RNA polymerase II-specific"/>
    <property type="evidence" value="ECO:0000314"/>
    <property type="project" value="SGD"/>
</dbReference>
<dbReference type="GO" id="GO:0008270">
    <property type="term" value="F:zinc ion binding"/>
    <property type="evidence" value="ECO:0007669"/>
    <property type="project" value="UniProtKB-KW"/>
</dbReference>
<dbReference type="GO" id="GO:0060963">
    <property type="term" value="P:positive regulation of ribosomal protein gene transcription by RNA polymerase II"/>
    <property type="evidence" value="ECO:0000315"/>
    <property type="project" value="SGD"/>
</dbReference>
<dbReference type="GO" id="GO:0045944">
    <property type="term" value="P:positive regulation of transcription by RNA polymerase II"/>
    <property type="evidence" value="ECO:0000315"/>
    <property type="project" value="SGD"/>
</dbReference>
<dbReference type="GO" id="GO:0008361">
    <property type="term" value="P:regulation of cell size"/>
    <property type="evidence" value="ECO:0000315"/>
    <property type="project" value="SGD"/>
</dbReference>
<dbReference type="FunFam" id="3.30.160.60:FF:001987">
    <property type="entry name" value="Transcription factor SFP1"/>
    <property type="match status" value="1"/>
</dbReference>
<dbReference type="Gene3D" id="3.30.160.60">
    <property type="entry name" value="Classic Zinc Finger"/>
    <property type="match status" value="1"/>
</dbReference>
<dbReference type="InterPro" id="IPR051580">
    <property type="entry name" value="ZnF-Chromatin_assoc"/>
</dbReference>
<dbReference type="InterPro" id="IPR036236">
    <property type="entry name" value="Znf_C2H2_sf"/>
</dbReference>
<dbReference type="InterPro" id="IPR013087">
    <property type="entry name" value="Znf_C2H2_type"/>
</dbReference>
<dbReference type="PANTHER" id="PTHR23057">
    <property type="entry name" value="JUXTAPOSED WITH ANOTHER ZINC FINGER PROTEIN 1"/>
    <property type="match status" value="1"/>
</dbReference>
<dbReference type="PANTHER" id="PTHR23057:SF0">
    <property type="entry name" value="JUXTAPOSED WITH ANOTHER ZINC FINGER PROTEIN 1"/>
    <property type="match status" value="1"/>
</dbReference>
<dbReference type="SMART" id="SM00355">
    <property type="entry name" value="ZnF_C2H2"/>
    <property type="match status" value="3"/>
</dbReference>
<dbReference type="SUPFAM" id="SSF57667">
    <property type="entry name" value="beta-beta-alpha zinc fingers"/>
    <property type="match status" value="1"/>
</dbReference>
<dbReference type="PROSITE" id="PS00028">
    <property type="entry name" value="ZINC_FINGER_C2H2_1"/>
    <property type="match status" value="2"/>
</dbReference>
<dbReference type="PROSITE" id="PS50157">
    <property type="entry name" value="ZINC_FINGER_C2H2_2"/>
    <property type="match status" value="2"/>
</dbReference>
<proteinExistence type="evidence at protein level"/>